<organism>
    <name type="scientific">Arabidopsis thaliana</name>
    <name type="common">Mouse-ear cress</name>
    <dbReference type="NCBI Taxonomy" id="3702"/>
    <lineage>
        <taxon>Eukaryota</taxon>
        <taxon>Viridiplantae</taxon>
        <taxon>Streptophyta</taxon>
        <taxon>Embryophyta</taxon>
        <taxon>Tracheophyta</taxon>
        <taxon>Spermatophyta</taxon>
        <taxon>Magnoliopsida</taxon>
        <taxon>eudicotyledons</taxon>
        <taxon>Gunneridae</taxon>
        <taxon>Pentapetalae</taxon>
        <taxon>rosids</taxon>
        <taxon>malvids</taxon>
        <taxon>Brassicales</taxon>
        <taxon>Brassicaceae</taxon>
        <taxon>Camelineae</taxon>
        <taxon>Arabidopsis</taxon>
    </lineage>
</organism>
<dbReference type="EMBL" id="AC013289">
    <property type="protein sequence ID" value="AAG52544.1"/>
    <property type="molecule type" value="Genomic_DNA"/>
</dbReference>
<dbReference type="EMBL" id="CP002684">
    <property type="protein sequence ID" value="AEE34961.1"/>
    <property type="molecule type" value="Genomic_DNA"/>
</dbReference>
<dbReference type="EMBL" id="CP002684">
    <property type="protein sequence ID" value="ANM60547.1"/>
    <property type="molecule type" value="Genomic_DNA"/>
</dbReference>
<dbReference type="EMBL" id="AJ344541">
    <property type="protein sequence ID" value="CAC87839.1"/>
    <property type="molecule type" value="mRNA"/>
</dbReference>
<dbReference type="PIR" id="E96718">
    <property type="entry name" value="E96718"/>
</dbReference>
<dbReference type="RefSeq" id="NP_001319357.1">
    <property type="nucleotide sequence ID" value="NM_001334418.1"/>
</dbReference>
<dbReference type="RefSeq" id="NP_177125.3">
    <property type="nucleotide sequence ID" value="NM_105635.4"/>
</dbReference>
<dbReference type="SMR" id="Q9C9L0"/>
<dbReference type="BioGRID" id="28524">
    <property type="interactions" value="7"/>
</dbReference>
<dbReference type="FunCoup" id="Q9C9L0">
    <property type="interactions" value="4212"/>
</dbReference>
<dbReference type="IntAct" id="Q9C9L0">
    <property type="interactions" value="7"/>
</dbReference>
<dbReference type="STRING" id="3702.Q9C9L0"/>
<dbReference type="PaxDb" id="3702-AT1G69670.1"/>
<dbReference type="ProteomicsDB" id="220506"/>
<dbReference type="EnsemblPlants" id="AT1G69670.1">
    <property type="protein sequence ID" value="AT1G69670.1"/>
    <property type="gene ID" value="AT1G69670"/>
</dbReference>
<dbReference type="EnsemblPlants" id="AT1G69670.2">
    <property type="protein sequence ID" value="AT1G69670.2"/>
    <property type="gene ID" value="AT1G69670"/>
</dbReference>
<dbReference type="GeneID" id="843303"/>
<dbReference type="Gramene" id="AT1G69670.1">
    <property type="protein sequence ID" value="AT1G69670.1"/>
    <property type="gene ID" value="AT1G69670"/>
</dbReference>
<dbReference type="Gramene" id="AT1G69670.2">
    <property type="protein sequence ID" value="AT1G69670.2"/>
    <property type="gene ID" value="AT1G69670"/>
</dbReference>
<dbReference type="KEGG" id="ath:AT1G69670"/>
<dbReference type="Araport" id="AT1G69670"/>
<dbReference type="TAIR" id="AT1G69670">
    <property type="gene designation" value="CUL3B"/>
</dbReference>
<dbReference type="eggNOG" id="KOG2166">
    <property type="taxonomic scope" value="Eukaryota"/>
</dbReference>
<dbReference type="HOGENOM" id="CLU_004747_7_1_1"/>
<dbReference type="InParanoid" id="Q9C9L0"/>
<dbReference type="OMA" id="NDKYEDM"/>
<dbReference type="PhylomeDB" id="Q9C9L0"/>
<dbReference type="UniPathway" id="UPA00143"/>
<dbReference type="PRO" id="PR:Q9C9L0"/>
<dbReference type="Proteomes" id="UP000006548">
    <property type="component" value="Chromosome 1"/>
</dbReference>
<dbReference type="ExpressionAtlas" id="Q9C9L0">
    <property type="expression patterns" value="baseline and differential"/>
</dbReference>
<dbReference type="GO" id="GO:0031625">
    <property type="term" value="F:ubiquitin protein ligase binding"/>
    <property type="evidence" value="ECO:0007669"/>
    <property type="project" value="InterPro"/>
</dbReference>
<dbReference type="GO" id="GO:0016567">
    <property type="term" value="P:protein ubiquitination"/>
    <property type="evidence" value="ECO:0007669"/>
    <property type="project" value="UniProtKB-UniPathway"/>
</dbReference>
<dbReference type="GO" id="GO:0006511">
    <property type="term" value="P:ubiquitin-dependent protein catabolic process"/>
    <property type="evidence" value="ECO:0007669"/>
    <property type="project" value="InterPro"/>
</dbReference>
<dbReference type="FunFam" id="1.10.10.10:FF:000183">
    <property type="entry name" value="Cullin 3"/>
    <property type="match status" value="1"/>
</dbReference>
<dbReference type="FunFam" id="1.20.1310.10:FF:000001">
    <property type="entry name" value="Cullin 3"/>
    <property type="match status" value="1"/>
</dbReference>
<dbReference type="FunFam" id="1.20.1310.10:FF:000005">
    <property type="entry name" value="Cullin 3"/>
    <property type="match status" value="1"/>
</dbReference>
<dbReference type="FunFam" id="1.20.1310.10:FF:000006">
    <property type="entry name" value="Cullin 3"/>
    <property type="match status" value="1"/>
</dbReference>
<dbReference type="FunFam" id="1.20.1310.10:FF:000002">
    <property type="entry name" value="cullin-3 isoform X1"/>
    <property type="match status" value="1"/>
</dbReference>
<dbReference type="FunFam" id="3.30.230.130:FF:000007">
    <property type="entry name" value="Cullin-3A like"/>
    <property type="match status" value="1"/>
</dbReference>
<dbReference type="Gene3D" id="1.20.1310.10">
    <property type="entry name" value="Cullin Repeats"/>
    <property type="match status" value="4"/>
</dbReference>
<dbReference type="Gene3D" id="3.30.230.130">
    <property type="entry name" value="Cullin, Chain C, Domain 2"/>
    <property type="match status" value="1"/>
</dbReference>
<dbReference type="Gene3D" id="1.10.10.10">
    <property type="entry name" value="Winged helix-like DNA-binding domain superfamily/Winged helix DNA-binding domain"/>
    <property type="match status" value="1"/>
</dbReference>
<dbReference type="InterPro" id="IPR045093">
    <property type="entry name" value="Cullin"/>
</dbReference>
<dbReference type="InterPro" id="IPR016158">
    <property type="entry name" value="Cullin_homology"/>
</dbReference>
<dbReference type="InterPro" id="IPR036317">
    <property type="entry name" value="Cullin_homology_sf"/>
</dbReference>
<dbReference type="InterPro" id="IPR001373">
    <property type="entry name" value="Cullin_N"/>
</dbReference>
<dbReference type="InterPro" id="IPR019559">
    <property type="entry name" value="Cullin_neddylation_domain"/>
</dbReference>
<dbReference type="InterPro" id="IPR016159">
    <property type="entry name" value="Cullin_repeat-like_dom_sf"/>
</dbReference>
<dbReference type="InterPro" id="IPR036388">
    <property type="entry name" value="WH-like_DNA-bd_sf"/>
</dbReference>
<dbReference type="InterPro" id="IPR036390">
    <property type="entry name" value="WH_DNA-bd_sf"/>
</dbReference>
<dbReference type="PANTHER" id="PTHR11932">
    <property type="entry name" value="CULLIN"/>
    <property type="match status" value="1"/>
</dbReference>
<dbReference type="Pfam" id="PF00888">
    <property type="entry name" value="Cullin"/>
    <property type="match status" value="1"/>
</dbReference>
<dbReference type="Pfam" id="PF10557">
    <property type="entry name" value="Cullin_Nedd8"/>
    <property type="match status" value="1"/>
</dbReference>
<dbReference type="SMART" id="SM00182">
    <property type="entry name" value="CULLIN"/>
    <property type="match status" value="1"/>
</dbReference>
<dbReference type="SMART" id="SM00884">
    <property type="entry name" value="Cullin_Nedd8"/>
    <property type="match status" value="1"/>
</dbReference>
<dbReference type="SUPFAM" id="SSF75632">
    <property type="entry name" value="Cullin homology domain"/>
    <property type="match status" value="1"/>
</dbReference>
<dbReference type="SUPFAM" id="SSF74788">
    <property type="entry name" value="Cullin repeat-like"/>
    <property type="match status" value="1"/>
</dbReference>
<dbReference type="SUPFAM" id="SSF46785">
    <property type="entry name" value="Winged helix' DNA-binding domain"/>
    <property type="match status" value="1"/>
</dbReference>
<dbReference type="PROSITE" id="PS50069">
    <property type="entry name" value="CULLIN_2"/>
    <property type="match status" value="1"/>
</dbReference>
<name>CUL3B_ARATH</name>
<gene>
    <name type="primary">CUL3B</name>
    <name type="ordered locus">At1g69670</name>
    <name type="ORF">T6C23.13</name>
</gene>
<feature type="chain" id="PRO_0000396850" description="Cullin-3B">
    <location>
        <begin position="1"/>
        <end position="732"/>
    </location>
</feature>
<feature type="domain" description="Cullin neddylation" evidence="3">
    <location>
        <begin position="662"/>
        <end position="724"/>
    </location>
</feature>
<feature type="cross-link" description="Glycyl lysine isopeptide (Lys-Gly) (interchain with G-Cter in NEDD8)" evidence="1">
    <location>
        <position position="676"/>
    </location>
</feature>
<proteinExistence type="evidence at protein level"/>
<reference key="1">
    <citation type="journal article" date="2000" name="Nature">
        <title>Sequence and analysis of chromosome 1 of the plant Arabidopsis thaliana.</title>
        <authorList>
            <person name="Theologis A."/>
            <person name="Ecker J.R."/>
            <person name="Palm C.J."/>
            <person name="Federspiel N.A."/>
            <person name="Kaul S."/>
            <person name="White O."/>
            <person name="Alonso J."/>
            <person name="Altafi H."/>
            <person name="Araujo R."/>
            <person name="Bowman C.L."/>
            <person name="Brooks S.Y."/>
            <person name="Buehler E."/>
            <person name="Chan A."/>
            <person name="Chao Q."/>
            <person name="Chen H."/>
            <person name="Cheuk R.F."/>
            <person name="Chin C.W."/>
            <person name="Chung M.K."/>
            <person name="Conn L."/>
            <person name="Conway A.B."/>
            <person name="Conway A.R."/>
            <person name="Creasy T.H."/>
            <person name="Dewar K."/>
            <person name="Dunn P."/>
            <person name="Etgu P."/>
            <person name="Feldblyum T.V."/>
            <person name="Feng J.-D."/>
            <person name="Fong B."/>
            <person name="Fujii C.Y."/>
            <person name="Gill J.E."/>
            <person name="Goldsmith A.D."/>
            <person name="Haas B."/>
            <person name="Hansen N.F."/>
            <person name="Hughes B."/>
            <person name="Huizar L."/>
            <person name="Hunter J.L."/>
            <person name="Jenkins J."/>
            <person name="Johnson-Hopson C."/>
            <person name="Khan S."/>
            <person name="Khaykin E."/>
            <person name="Kim C.J."/>
            <person name="Koo H.L."/>
            <person name="Kremenetskaia I."/>
            <person name="Kurtz D.B."/>
            <person name="Kwan A."/>
            <person name="Lam B."/>
            <person name="Langin-Hooper S."/>
            <person name="Lee A."/>
            <person name="Lee J.M."/>
            <person name="Lenz C.A."/>
            <person name="Li J.H."/>
            <person name="Li Y.-P."/>
            <person name="Lin X."/>
            <person name="Liu S.X."/>
            <person name="Liu Z.A."/>
            <person name="Luros J.S."/>
            <person name="Maiti R."/>
            <person name="Marziali A."/>
            <person name="Militscher J."/>
            <person name="Miranda M."/>
            <person name="Nguyen M."/>
            <person name="Nierman W.C."/>
            <person name="Osborne B.I."/>
            <person name="Pai G."/>
            <person name="Peterson J."/>
            <person name="Pham P.K."/>
            <person name="Rizzo M."/>
            <person name="Rooney T."/>
            <person name="Rowley D."/>
            <person name="Sakano H."/>
            <person name="Salzberg S.L."/>
            <person name="Schwartz J.R."/>
            <person name="Shinn P."/>
            <person name="Southwick A.M."/>
            <person name="Sun H."/>
            <person name="Tallon L.J."/>
            <person name="Tambunga G."/>
            <person name="Toriumi M.J."/>
            <person name="Town C.D."/>
            <person name="Utterback T."/>
            <person name="Van Aken S."/>
            <person name="Vaysberg M."/>
            <person name="Vysotskaia V.S."/>
            <person name="Walker M."/>
            <person name="Wu D."/>
            <person name="Yu G."/>
            <person name="Fraser C.M."/>
            <person name="Venter J.C."/>
            <person name="Davis R.W."/>
        </authorList>
    </citation>
    <scope>NUCLEOTIDE SEQUENCE [LARGE SCALE GENOMIC DNA]</scope>
    <source>
        <strain>cv. Columbia</strain>
    </source>
</reference>
<reference key="2">
    <citation type="journal article" date="2017" name="Plant J.">
        <title>Araport11: a complete reannotation of the Arabidopsis thaliana reference genome.</title>
        <authorList>
            <person name="Cheng C.Y."/>
            <person name="Krishnakumar V."/>
            <person name="Chan A.P."/>
            <person name="Thibaud-Nissen F."/>
            <person name="Schobel S."/>
            <person name="Town C.D."/>
        </authorList>
    </citation>
    <scope>GENOME REANNOTATION</scope>
    <source>
        <strain>cv. Columbia</strain>
    </source>
</reference>
<reference key="3">
    <citation type="submission" date="2001-09" db="EMBL/GenBank/DDBJ databases">
        <title>Characterization of plant cullins.</title>
        <authorList>
            <person name="Shen W.H."/>
            <person name="Genschik P."/>
        </authorList>
    </citation>
    <scope>NUCLEOTIDE SEQUENCE [MRNA] OF 132-732</scope>
</reference>
<reference key="4">
    <citation type="journal article" date="2005" name="J. Biol. Chem.">
        <title>Cullins 3a and 3b assemble with members of the broad complex/tramtrack/bric-a-brac (BTB) protein family to form essential ubiquitin-protein ligases (E3s) in Arabidopsis.</title>
        <authorList>
            <person name="Gingerich D.J."/>
            <person name="Gagne J.M."/>
            <person name="Salter D.W."/>
            <person name="Hellmann H."/>
            <person name="Estelle M."/>
            <person name="Ma L."/>
            <person name="Vierstra R.D."/>
        </authorList>
    </citation>
    <scope>INTERACTION WITH BPM1</scope>
</reference>
<reference key="5">
    <citation type="journal article" date="2005" name="Plant Cell">
        <title>Arabidopsis has two redundant Cullin3 proteins that are essential for embryo development and that interact with RBX1 and BTB proteins to form multisubunit E3 ubiquitin ligase complexes in vivo.</title>
        <authorList>
            <person name="Figueroa P."/>
            <person name="Gusmaroli G."/>
            <person name="Serino G."/>
            <person name="Habashi J."/>
            <person name="Ma L."/>
            <person name="Shen Y."/>
            <person name="Feng S."/>
            <person name="Bostick M."/>
            <person name="Callis J."/>
            <person name="Hellmann H."/>
            <person name="Deng X.W."/>
        </authorList>
    </citation>
    <scope>FUNCTION</scope>
    <scope>INTERACTION WITH RBX1A</scope>
    <scope>NEDDYLATION</scope>
    <scope>DISRUPTION PHENOTYPE</scope>
</reference>
<reference key="6">
    <citation type="journal article" date="2005" name="Plant J.">
        <title>Molecular and functional characterization of Arabidopsis Cullin 3A.</title>
        <authorList>
            <person name="Dieterle M."/>
            <person name="Thomann A."/>
            <person name="Renou J.P."/>
            <person name="Parmentier Y."/>
            <person name="Cognat V."/>
            <person name="Lemonnier G."/>
            <person name="Muller R."/>
            <person name="Shen W.H."/>
            <person name="Kretsch T."/>
            <person name="Genschik P."/>
        </authorList>
    </citation>
    <scope>FUNCTION</scope>
    <scope>INTERACTION WITH RBX1A</scope>
    <scope>DISRUPTION PHENOTYPE</scope>
</reference>
<reference key="7">
    <citation type="journal article" date="2005" name="Plant J.">
        <title>Arabidopsis CUL3A and CUL3B genes are essential for normal embryogenesis.</title>
        <authorList>
            <person name="Thomann A."/>
            <person name="Brukhin V."/>
            <person name="Dieterle M."/>
            <person name="Gheyeselinck J."/>
            <person name="Vantard M."/>
            <person name="Grossniklaus U."/>
            <person name="Genschik P."/>
        </authorList>
    </citation>
    <scope>FUNCTION</scope>
    <scope>DEVELOPMENTAL STAGE</scope>
    <scope>DISRUPTION PHENOTYPE</scope>
</reference>
<reference key="8">
    <citation type="journal article" date="2005" name="Plant Physiol.">
        <title>Arabidopsis AtCUL3a and AtCUL3b form complexes with members of the BTB/POZ-MATH protein family.</title>
        <authorList>
            <person name="Weber H."/>
            <person name="Bernhardt A."/>
            <person name="Dieterle M."/>
            <person name="Hano P."/>
            <person name="Mutlu A."/>
            <person name="Estelle M."/>
            <person name="Genschik P."/>
            <person name="Hellmann H."/>
        </authorList>
    </citation>
    <scope>CUL3-RBX1-BTB UBIQUITIN-PROTEIN LIGASE COMPLEX</scope>
    <scope>INTERACTION WITH BPM3</scope>
</reference>
<reference key="9">
    <citation type="journal article" date="2009" name="PLoS Genet.">
        <title>Arabidopsis CULLIN3 genes regulate primary root growth and patterning by ethylene-dependent and -independent mechanisms.</title>
        <authorList>
            <person name="Thomann A."/>
            <person name="Lechner E."/>
            <person name="Hansen M."/>
            <person name="Dumbliauskas E."/>
            <person name="Parmentier Y."/>
            <person name="Kieber J."/>
            <person name="Scheres B."/>
            <person name="Genschik P."/>
        </authorList>
    </citation>
    <scope>FUNCTION</scope>
</reference>
<keyword id="KW-1017">Isopeptide bond</keyword>
<keyword id="KW-1185">Reference proteome</keyword>
<keyword id="KW-0832">Ubl conjugation</keyword>
<keyword id="KW-0833">Ubl conjugation pathway</keyword>
<comment type="function">
    <text evidence="6 8 9 10">Component of the cullin-RING ubiquitin ligases (CRL), or CUL3-RBX1-BTB protein E3 ligase complexes which mediate the ubiquitination and subsequent proteasomal degradation of target proteins. The functional specificity of the CRL complex depends on the BTB domain-containing protein as the substrate recognition component. Involved in embryo pattern formation and endosperm development. Required for the normal division and organization of the root stem cells and columella root cap cells. Regulates primary root growth by an unknown pathway, but in an ethylene-dependent manner. Functions in distal root patterning, by an ethylene-independent mechanism. Functionally redundant with CUL3A.</text>
</comment>
<comment type="pathway">
    <text>Protein modification; protein ubiquitination.</text>
</comment>
<comment type="subunit">
    <text evidence="5 6 7 8">Interacts with BTB/POZ-MATH proteins BPM1 and BPM3.</text>
</comment>
<comment type="interaction">
    <interactant intactId="EBI-541687">
        <id>Q9C9L0</id>
    </interactant>
    <interactant intactId="EBI-540891">
        <id>Q8L765</id>
        <label>BPM1</label>
    </interactant>
    <organismsDiffer>false</organismsDiffer>
    <experiments>3</experiments>
</comment>
<comment type="interaction">
    <interactant intactId="EBI-541687">
        <id>Q9C9L0</id>
    </interactant>
    <interactant intactId="EBI-532404">
        <id>Q940X7</id>
        <label>RBX1A</label>
    </interactant>
    <organismsDiffer>false</organismsDiffer>
    <experiments>3</experiments>
</comment>
<comment type="developmental stage">
    <text evidence="9">Expressed in developing and mature reproductive organs and during embryogenesis.</text>
</comment>
<comment type="PTM">
    <text evidence="2">Neddylated. Deneddylated via its interaction with the COP9 signalosome (CSN) complex.</text>
</comment>
<comment type="disruption phenotype">
    <text evidence="6 8 9">No visible phenotype. Cul3a and cul3b double mutant is embryonic lethal (PubMed:16045478).</text>
</comment>
<comment type="similarity">
    <text evidence="4">Belongs to the cullin family.</text>
</comment>
<sequence length="732" mass="85610">MSNQKKRNFQIEAFKQRVVVDPKYADKTWKILEHAIHEIYNHNASGLSFEELYRNAYNMVLHKYGDKLYTGLVTTMTFHLKEICKSIEEAQGGAFLELLNRKWNDHNKALQMIRDILMYMDRTYVSTTKKTHVHELGLHLWRDNVVYSSKIQTRLLNTLLDLVHKERTGEVIDRVLMRNVIKMFMDLGESVYQDDFEKPFLEASAEFYKVESMEFIESCDCGEYLKKAEKPLVEEVERVVNYLDAKSEAKITSVVEREMIANHVQRLVHMENSGLVNMLLNDKYEDMGRMYSLFRRVANGLVTVRDVMTLHLREMGKQLVTDPEKSKDPVEFVQRLLDERDKYDRIINMAFNNDKTFQNALNSSFEYFVNLNTRSPEFISLFVDDKLRKGLKGVGEEDVDLILDKVMMLFRYLQEKDVFEKYYKQHLAKRLLSGKTVSDDAERNLIVKLKTECGYQFTSKLEGMFTDMKTSHDTLLGFYNSHPELSEGPTLVVQVLTTGSWPTQPTIQCNLPAEVSVLCEKFRSYYLGTHTGRRLSWQTNMGTADIKAVFGKGQKHELNVSTFQMCVLMLFNNSDRLSYKEIEQATEIPTPDLKRCLQSMACVKGKNVLRKEPMSKEIAEEDWFVVNDRFASKFYKVKIGTVVAQKETEPEKQETRQRVEEDRKPQIEAAIVRIMKSRRVLDHNNIIAEVTKQLQTRFLANPTEIKKRIESLIERDFLERDNTDRKLYRYLA</sequence>
<evidence type="ECO:0000250" key="1">
    <source>
        <dbReference type="UniProtKB" id="Q13616"/>
    </source>
</evidence>
<evidence type="ECO:0000250" key="2">
    <source>
        <dbReference type="UniProtKB" id="Q17391"/>
    </source>
</evidence>
<evidence type="ECO:0000255" key="3"/>
<evidence type="ECO:0000255" key="4">
    <source>
        <dbReference type="PROSITE-ProRule" id="PRU00330"/>
    </source>
</evidence>
<evidence type="ECO:0000269" key="5">
    <source>
    </source>
</evidence>
<evidence type="ECO:0000269" key="6">
    <source>
    </source>
</evidence>
<evidence type="ECO:0000269" key="7">
    <source>
    </source>
</evidence>
<evidence type="ECO:0000269" key="8">
    <source>
    </source>
</evidence>
<evidence type="ECO:0000269" key="9">
    <source>
    </source>
</evidence>
<evidence type="ECO:0000269" key="10">
    <source>
    </source>
</evidence>
<accession>Q9C9L0</accession>
<accession>Q711G4</accession>
<protein>
    <recommendedName>
        <fullName>Cullin-3B</fullName>
        <shortName>AtCUL3b</shortName>
    </recommendedName>
</protein>